<feature type="chain" id="PRO_1000072024" description="Ferrochelatase">
    <location>
        <begin position="1"/>
        <end position="344"/>
    </location>
</feature>
<feature type="binding site" evidence="1">
    <location>
        <position position="211"/>
    </location>
    <ligand>
        <name>Fe cation</name>
        <dbReference type="ChEBI" id="CHEBI:24875"/>
    </ligand>
</feature>
<feature type="binding site" evidence="1">
    <location>
        <position position="292"/>
    </location>
    <ligand>
        <name>Fe cation</name>
        <dbReference type="ChEBI" id="CHEBI:24875"/>
    </ligand>
</feature>
<organism>
    <name type="scientific">Methylobacillus flagellatus (strain ATCC 51484 / DSM 6875 / VKM B-1610 / KT)</name>
    <dbReference type="NCBI Taxonomy" id="265072"/>
    <lineage>
        <taxon>Bacteria</taxon>
        <taxon>Pseudomonadati</taxon>
        <taxon>Pseudomonadota</taxon>
        <taxon>Betaproteobacteria</taxon>
        <taxon>Nitrosomonadales</taxon>
        <taxon>Methylophilaceae</taxon>
        <taxon>Methylobacillus</taxon>
    </lineage>
</organism>
<reference key="1">
    <citation type="submission" date="2006-03" db="EMBL/GenBank/DDBJ databases">
        <title>Complete sequence of Methylobacillus flagellatus KT.</title>
        <authorList>
            <consortium name="US DOE Joint Genome Institute"/>
            <person name="Copeland A."/>
            <person name="Lucas S."/>
            <person name="Lapidus A."/>
            <person name="Barry K."/>
            <person name="Detter J.C."/>
            <person name="Glavina del Rio T."/>
            <person name="Hammon N."/>
            <person name="Israni S."/>
            <person name="Dalin E."/>
            <person name="Tice H."/>
            <person name="Pitluck S."/>
            <person name="Brettin T."/>
            <person name="Bruce D."/>
            <person name="Han C."/>
            <person name="Tapia R."/>
            <person name="Saunders E."/>
            <person name="Gilna P."/>
            <person name="Schmutz J."/>
            <person name="Larimer F."/>
            <person name="Land M."/>
            <person name="Kyrpides N."/>
            <person name="Anderson I."/>
            <person name="Richardson P."/>
        </authorList>
    </citation>
    <scope>NUCLEOTIDE SEQUENCE [LARGE SCALE GENOMIC DNA]</scope>
    <source>
        <strain>ATCC 51484 / DSM 6875 / VKM B-1610 / KT</strain>
    </source>
</reference>
<dbReference type="EC" id="4.98.1.1" evidence="1"/>
<dbReference type="EMBL" id="CP000284">
    <property type="protein sequence ID" value="ABE49040.1"/>
    <property type="molecule type" value="Genomic_DNA"/>
</dbReference>
<dbReference type="RefSeq" id="WP_011479137.1">
    <property type="nucleotide sequence ID" value="NC_007947.1"/>
</dbReference>
<dbReference type="SMR" id="Q1H397"/>
<dbReference type="STRING" id="265072.Mfla_0772"/>
<dbReference type="KEGG" id="mfa:Mfla_0772"/>
<dbReference type="eggNOG" id="COG0276">
    <property type="taxonomic scope" value="Bacteria"/>
</dbReference>
<dbReference type="HOGENOM" id="CLU_018884_0_0_4"/>
<dbReference type="OrthoDB" id="9809741at2"/>
<dbReference type="UniPathway" id="UPA00252">
    <property type="reaction ID" value="UER00325"/>
</dbReference>
<dbReference type="Proteomes" id="UP000002440">
    <property type="component" value="Chromosome"/>
</dbReference>
<dbReference type="GO" id="GO:0005737">
    <property type="term" value="C:cytoplasm"/>
    <property type="evidence" value="ECO:0007669"/>
    <property type="project" value="UniProtKB-SubCell"/>
</dbReference>
<dbReference type="GO" id="GO:0004325">
    <property type="term" value="F:ferrochelatase activity"/>
    <property type="evidence" value="ECO:0007669"/>
    <property type="project" value="UniProtKB-UniRule"/>
</dbReference>
<dbReference type="GO" id="GO:0046872">
    <property type="term" value="F:metal ion binding"/>
    <property type="evidence" value="ECO:0007669"/>
    <property type="project" value="UniProtKB-KW"/>
</dbReference>
<dbReference type="GO" id="GO:0006783">
    <property type="term" value="P:heme biosynthetic process"/>
    <property type="evidence" value="ECO:0007669"/>
    <property type="project" value="UniProtKB-UniRule"/>
</dbReference>
<dbReference type="CDD" id="cd00419">
    <property type="entry name" value="Ferrochelatase_C"/>
    <property type="match status" value="1"/>
</dbReference>
<dbReference type="CDD" id="cd03411">
    <property type="entry name" value="Ferrochelatase_N"/>
    <property type="match status" value="1"/>
</dbReference>
<dbReference type="FunFam" id="3.40.50.1400:FF:000002">
    <property type="entry name" value="Ferrochelatase"/>
    <property type="match status" value="1"/>
</dbReference>
<dbReference type="Gene3D" id="3.40.50.1400">
    <property type="match status" value="2"/>
</dbReference>
<dbReference type="HAMAP" id="MF_00323">
    <property type="entry name" value="Ferrochelatase"/>
    <property type="match status" value="1"/>
</dbReference>
<dbReference type="InterPro" id="IPR001015">
    <property type="entry name" value="Ferrochelatase"/>
</dbReference>
<dbReference type="InterPro" id="IPR019772">
    <property type="entry name" value="Ferrochelatase_AS"/>
</dbReference>
<dbReference type="InterPro" id="IPR033644">
    <property type="entry name" value="Ferrochelatase_C"/>
</dbReference>
<dbReference type="InterPro" id="IPR033659">
    <property type="entry name" value="Ferrochelatase_N"/>
</dbReference>
<dbReference type="NCBIfam" id="TIGR00109">
    <property type="entry name" value="hemH"/>
    <property type="match status" value="1"/>
</dbReference>
<dbReference type="PANTHER" id="PTHR11108">
    <property type="entry name" value="FERROCHELATASE"/>
    <property type="match status" value="1"/>
</dbReference>
<dbReference type="PANTHER" id="PTHR11108:SF1">
    <property type="entry name" value="FERROCHELATASE, MITOCHONDRIAL"/>
    <property type="match status" value="1"/>
</dbReference>
<dbReference type="Pfam" id="PF00762">
    <property type="entry name" value="Ferrochelatase"/>
    <property type="match status" value="1"/>
</dbReference>
<dbReference type="SUPFAM" id="SSF53800">
    <property type="entry name" value="Chelatase"/>
    <property type="match status" value="1"/>
</dbReference>
<dbReference type="PROSITE" id="PS00534">
    <property type="entry name" value="FERROCHELATASE"/>
    <property type="match status" value="1"/>
</dbReference>
<evidence type="ECO:0000255" key="1">
    <source>
        <dbReference type="HAMAP-Rule" id="MF_00323"/>
    </source>
</evidence>
<keyword id="KW-0963">Cytoplasm</keyword>
<keyword id="KW-0350">Heme biosynthesis</keyword>
<keyword id="KW-0408">Iron</keyword>
<keyword id="KW-0456">Lyase</keyword>
<keyword id="KW-0479">Metal-binding</keyword>
<keyword id="KW-0627">Porphyrin biosynthesis</keyword>
<keyword id="KW-1185">Reference proteome</keyword>
<sequence>MAYYLKEPSIPTQEPERTGILVMNLGTPEAPTAKALRPYLRQFLSDRRVIELPRPLWWFILNGVILVLRPRQSAHKYATIWDKEGPPLMVNSQKQARLLEGYLHEAISSPYAVELGMRYGSPSIASALGKLKAKNCNRILLFPLYPQYAASSSASALDEAMRTLIRTRNMPEIRTIRDYHDHPAYIHAVAKSIRLYWQQHGKPEKLVMSFHGVPRRTYDLGDPYYDQCQTSGKLVAQALGLEEDQYMIAFQSRFGTAEWLQPYFAPSIQALGKQKLRRVDVVCPGFSSDCLETLEEIAMEGKSLFLEGGGGEYHYIPALNDNDTWIKAMREIALDNLQGWVTRR</sequence>
<gene>
    <name evidence="1" type="primary">hemH</name>
    <name type="ordered locus">Mfla_0772</name>
</gene>
<name>HEMH_METFK</name>
<proteinExistence type="inferred from homology"/>
<protein>
    <recommendedName>
        <fullName evidence="1">Ferrochelatase</fullName>
        <ecNumber evidence="1">4.98.1.1</ecNumber>
    </recommendedName>
    <alternativeName>
        <fullName evidence="1">Heme synthase</fullName>
    </alternativeName>
    <alternativeName>
        <fullName evidence="1">Protoheme ferro-lyase</fullName>
    </alternativeName>
</protein>
<accession>Q1H397</accession>
<comment type="function">
    <text evidence="1">Catalyzes the ferrous insertion into protoporphyrin IX.</text>
</comment>
<comment type="catalytic activity">
    <reaction evidence="1">
        <text>heme b + 2 H(+) = protoporphyrin IX + Fe(2+)</text>
        <dbReference type="Rhea" id="RHEA:22584"/>
        <dbReference type="ChEBI" id="CHEBI:15378"/>
        <dbReference type="ChEBI" id="CHEBI:29033"/>
        <dbReference type="ChEBI" id="CHEBI:57306"/>
        <dbReference type="ChEBI" id="CHEBI:60344"/>
        <dbReference type="EC" id="4.98.1.1"/>
    </reaction>
</comment>
<comment type="pathway">
    <text evidence="1">Porphyrin-containing compound metabolism; protoheme biosynthesis; protoheme from protoporphyrin-IX: step 1/1.</text>
</comment>
<comment type="subcellular location">
    <subcellularLocation>
        <location evidence="1">Cytoplasm</location>
    </subcellularLocation>
</comment>
<comment type="similarity">
    <text evidence="1">Belongs to the ferrochelatase family.</text>
</comment>